<comment type="function">
    <text evidence="2">Sesquiterpene synthase converting farnesyl diphosphate to beta-caryophyllene as the major product.</text>
</comment>
<comment type="catalytic activity">
    <reaction evidence="2">
        <text>(2E,6E)-farnesyl diphosphate = (+)-(E)-beta-caryophyllene + diphosphate</text>
        <dbReference type="Rhea" id="RHEA:31815"/>
        <dbReference type="ChEBI" id="CHEBI:33019"/>
        <dbReference type="ChEBI" id="CHEBI:63190"/>
        <dbReference type="ChEBI" id="CHEBI:175763"/>
    </reaction>
</comment>
<comment type="cofactor">
    <cofactor evidence="1">
        <name>Mg(2+)</name>
        <dbReference type="ChEBI" id="CHEBI:18420"/>
    </cofactor>
    <text evidence="1">Binds 3 Mg(2+) ions per subunit.</text>
</comment>
<comment type="pathway">
    <text>Secondary metabolite biosynthesis; terpenoid biosynthesis.</text>
</comment>
<comment type="domain">
    <text evidence="1">The Asp-Asp-Xaa-Xaa-Asp/Glu (DDXXD/E) motif is important for the catalytic activity, presumably through binding to Mg(2+).</text>
</comment>
<comment type="similarity">
    <text evidence="3">Belongs to the terpene synthase family.</text>
</comment>
<name>TPS6_PHYDL</name>
<proteinExistence type="evidence at protein level"/>
<organism>
    <name type="scientific">Phyla dulcis</name>
    <name type="common">Aztec sweet herb</name>
    <name type="synonym">Lippia dulcis</name>
    <dbReference type="NCBI Taxonomy" id="542674"/>
    <lineage>
        <taxon>Eukaryota</taxon>
        <taxon>Viridiplantae</taxon>
        <taxon>Streptophyta</taxon>
        <taxon>Embryophyta</taxon>
        <taxon>Tracheophyta</taxon>
        <taxon>Spermatophyta</taxon>
        <taxon>Magnoliopsida</taxon>
        <taxon>eudicotyledons</taxon>
        <taxon>Gunneridae</taxon>
        <taxon>Pentapetalae</taxon>
        <taxon>asterids</taxon>
        <taxon>lamiids</taxon>
        <taxon>Lamiales</taxon>
        <taxon>Verbenaceae</taxon>
        <taxon>Lantaneae</taxon>
        <taxon>Phyla</taxon>
    </lineage>
</organism>
<evidence type="ECO:0000250" key="1"/>
<evidence type="ECO:0000269" key="2">
    <source>
    </source>
</evidence>
<evidence type="ECO:0000305" key="3"/>
<feature type="chain" id="PRO_0000421953" description="Beta-caryophyllene synthase">
    <location>
        <begin position="1"/>
        <end position="555"/>
    </location>
</feature>
<feature type="short sequence motif" description="DDXXD motif">
    <location>
        <begin position="313"/>
        <end position="317"/>
    </location>
</feature>
<feature type="binding site" evidence="1">
    <location>
        <position position="313"/>
    </location>
    <ligand>
        <name>Mg(2+)</name>
        <dbReference type="ChEBI" id="CHEBI:18420"/>
        <label>1</label>
    </ligand>
</feature>
<feature type="binding site" evidence="1">
    <location>
        <position position="313"/>
    </location>
    <ligand>
        <name>Mg(2+)</name>
        <dbReference type="ChEBI" id="CHEBI:18420"/>
        <label>2</label>
    </ligand>
</feature>
<feature type="binding site" evidence="1">
    <location>
        <position position="317"/>
    </location>
    <ligand>
        <name>Mg(2+)</name>
        <dbReference type="ChEBI" id="CHEBI:18420"/>
        <label>1</label>
    </ligand>
</feature>
<feature type="binding site" evidence="1">
    <location>
        <position position="317"/>
    </location>
    <ligand>
        <name>Mg(2+)</name>
        <dbReference type="ChEBI" id="CHEBI:18420"/>
        <label>2</label>
    </ligand>
</feature>
<feature type="binding site" evidence="1">
    <location>
        <position position="456"/>
    </location>
    <ligand>
        <name>Mg(2+)</name>
        <dbReference type="ChEBI" id="CHEBI:18420"/>
        <label>3</label>
    </ligand>
</feature>
<feature type="binding site" evidence="1">
    <location>
        <position position="464"/>
    </location>
    <ligand>
        <name>Mg(2+)</name>
        <dbReference type="ChEBI" id="CHEBI:18420"/>
        <label>3</label>
    </ligand>
</feature>
<accession>J7LJN5</accession>
<protein>
    <recommendedName>
        <fullName>Beta-caryophyllene synthase</fullName>
        <ecNumber>4.2.3.-</ecNumber>
    </recommendedName>
    <alternativeName>
        <fullName>Terpene synthase 6</fullName>
        <shortName>LdTPS6</shortName>
    </alternativeName>
</protein>
<reference key="1">
    <citation type="journal article" date="2012" name="Arch. Biochem. Biophys.">
        <title>Molecular cloning and characterization of (+)-epi-alpha-bisabolol synthase, catalyzing the first step in the biosynthesis of the natural sweetener, hernandulcin, in Lippia dulcis.</title>
        <authorList>
            <person name="Attia M."/>
            <person name="Kim S.U."/>
            <person name="Ro D.K."/>
        </authorList>
    </citation>
    <scope>NUCLEOTIDE SEQUENCE [MRNA]</scope>
    <scope>FUNCTION</scope>
    <scope>CATALYTIC ACTIVITY</scope>
</reference>
<sequence>MGIHSSAENVALENVRQSVTYHPSVWGDYFLTPASNHEESSTSEGEELQESRQEVEKLLGATHDDSLQKLELIDAIQRLGVDHHFQKEIEKSLQDIYLRCCNDKDDYDHNQTDLHTVALRFRLLRQQGYNISSETFNKFTDRNGKFEESLADDVRGMLSLYEAAHCGVQGEKILDEALVFSSSNLKSILAKNHMSNSGLTARIEEAFDTPIRKCLTNFGARKFMSMYEEDESHSEALLKFARLDFNFSQKLHQKEISDLTRWWKELDFKTKLPFARDRMVECYCWTLGIHPEPQYNLARNFLSKVIMLASVIDDIYDVRGTLDELQLFTDAIQRWDISAMEQLPPYMRVCYEALLNVYAEVEELERIDGPYRVHYAKEEMKKLARAYLEESQWLYKKYIPTFKEYMSVAIPSSGYIMVAGNCLVGLGNSLVMKDFDWVSCEPLMVKASAIIARLMDDMAGHGFEKKISAVECYTNENGASEKEAFEELEKQVSNAWKDMNQEFLHPTAVSMTVLTRVLNAARVIHLLYKDGDSYTNSKTYIKELIEAVLIQPVKI</sequence>
<dbReference type="EC" id="4.2.3.-"/>
<dbReference type="EMBL" id="JQ731634">
    <property type="protein sequence ID" value="AFR23370.1"/>
    <property type="molecule type" value="mRNA"/>
</dbReference>
<dbReference type="SMR" id="J7LJN5"/>
<dbReference type="UniPathway" id="UPA00213"/>
<dbReference type="GO" id="GO:0000287">
    <property type="term" value="F:magnesium ion binding"/>
    <property type="evidence" value="ECO:0007669"/>
    <property type="project" value="InterPro"/>
</dbReference>
<dbReference type="GO" id="GO:0010334">
    <property type="term" value="F:sesquiterpene synthase activity"/>
    <property type="evidence" value="ECO:0000314"/>
    <property type="project" value="UniProtKB"/>
</dbReference>
<dbReference type="GO" id="GO:1901937">
    <property type="term" value="P:beta-caryophyllene biosynthetic process"/>
    <property type="evidence" value="ECO:0000314"/>
    <property type="project" value="UniProtKB"/>
</dbReference>
<dbReference type="GO" id="GO:0016102">
    <property type="term" value="P:diterpenoid biosynthetic process"/>
    <property type="evidence" value="ECO:0007669"/>
    <property type="project" value="InterPro"/>
</dbReference>
<dbReference type="GO" id="GO:0045339">
    <property type="term" value="P:farnesyl diphosphate catabolic process"/>
    <property type="evidence" value="ECO:0000314"/>
    <property type="project" value="UniProtKB"/>
</dbReference>
<dbReference type="CDD" id="cd00684">
    <property type="entry name" value="Terpene_cyclase_plant_C1"/>
    <property type="match status" value="1"/>
</dbReference>
<dbReference type="FunFam" id="1.10.600.10:FF:000007">
    <property type="entry name" value="Isoprene synthase, chloroplastic"/>
    <property type="match status" value="1"/>
</dbReference>
<dbReference type="FunFam" id="1.50.10.130:FF:000001">
    <property type="entry name" value="Isoprene synthase, chloroplastic"/>
    <property type="match status" value="1"/>
</dbReference>
<dbReference type="Gene3D" id="1.10.600.10">
    <property type="entry name" value="Farnesyl Diphosphate Synthase"/>
    <property type="match status" value="1"/>
</dbReference>
<dbReference type="Gene3D" id="1.50.10.130">
    <property type="entry name" value="Terpene synthase, N-terminal domain"/>
    <property type="match status" value="1"/>
</dbReference>
<dbReference type="InterPro" id="IPR008949">
    <property type="entry name" value="Isoprenoid_synthase_dom_sf"/>
</dbReference>
<dbReference type="InterPro" id="IPR034741">
    <property type="entry name" value="Terpene_cyclase-like_1_C"/>
</dbReference>
<dbReference type="InterPro" id="IPR044814">
    <property type="entry name" value="Terpene_cyclase_plant_C1"/>
</dbReference>
<dbReference type="InterPro" id="IPR001906">
    <property type="entry name" value="Terpene_synth_N"/>
</dbReference>
<dbReference type="InterPro" id="IPR036965">
    <property type="entry name" value="Terpene_synth_N_sf"/>
</dbReference>
<dbReference type="InterPro" id="IPR050148">
    <property type="entry name" value="Terpene_synthase-like"/>
</dbReference>
<dbReference type="InterPro" id="IPR005630">
    <property type="entry name" value="Terpene_synthase_metal-bd"/>
</dbReference>
<dbReference type="InterPro" id="IPR008930">
    <property type="entry name" value="Terpenoid_cyclase/PrenylTrfase"/>
</dbReference>
<dbReference type="PANTHER" id="PTHR31225:SF221">
    <property type="entry name" value="(-)-GERMACRENE D SYNTHASE"/>
    <property type="match status" value="1"/>
</dbReference>
<dbReference type="PANTHER" id="PTHR31225">
    <property type="entry name" value="OS04G0344100 PROTEIN-RELATED"/>
    <property type="match status" value="1"/>
</dbReference>
<dbReference type="Pfam" id="PF01397">
    <property type="entry name" value="Terpene_synth"/>
    <property type="match status" value="1"/>
</dbReference>
<dbReference type="Pfam" id="PF03936">
    <property type="entry name" value="Terpene_synth_C"/>
    <property type="match status" value="1"/>
</dbReference>
<dbReference type="SFLD" id="SFLDS00005">
    <property type="entry name" value="Isoprenoid_Synthase_Type_I"/>
    <property type="match status" value="1"/>
</dbReference>
<dbReference type="SFLD" id="SFLDG01019">
    <property type="entry name" value="Terpene_Cyclase_Like_1_C_Termi"/>
    <property type="match status" value="1"/>
</dbReference>
<dbReference type="SUPFAM" id="SSF48239">
    <property type="entry name" value="Terpenoid cyclases/Protein prenyltransferases"/>
    <property type="match status" value="1"/>
</dbReference>
<dbReference type="SUPFAM" id="SSF48576">
    <property type="entry name" value="Terpenoid synthases"/>
    <property type="match status" value="1"/>
</dbReference>
<keyword id="KW-0456">Lyase</keyword>
<keyword id="KW-0460">Magnesium</keyword>
<keyword id="KW-0479">Metal-binding</keyword>